<reference key="1">
    <citation type="journal article" date="2004" name="Genome Res.">
        <title>The status, quality, and expansion of the NIH full-length cDNA project: the Mammalian Gene Collection (MGC).</title>
        <authorList>
            <consortium name="The MGC Project Team"/>
        </authorList>
    </citation>
    <scope>NUCLEOTIDE SEQUENCE [LARGE SCALE MRNA]</scope>
    <source>
        <tissue>Prostate</tissue>
    </source>
</reference>
<proteinExistence type="evidence at transcript level"/>
<comment type="function">
    <text evidence="1">Component of a Polycomb group (PcG) multiprotein PRC1-like complex, a complex class required to maintain the transcriptionally repressive state of many genes, including Hox genes, throughout development. PcG PRC1 complex acts via chromatin remodeling and modification of histones; it mediates monoubiquitination of histone H2A 'Lys-119', rendering chromatin heritably changed in its expressibility. Promotes histone H3 trimethylation at 'Lys-9' (H3K9me3). Binds to histone H3 trimethylated 'Lys-9' (H3K9me3) or at 'Lys-27' (H3K27me3). May possibly also bind trimethylated lysine residues in other proteins (in vitro). Binds non-coding, single-stranded and double-stranded RNA. Plays a role in the timely repression of differentiation-specific genes in pluripotent embryonic stem cells to maintain the undifferentiated state. Regulator of cellular lifespan by maintaining the repression of CDKN2A, but not by inducing telomerase activity (By similarity).</text>
</comment>
<comment type="subunit">
    <text evidence="1">Component of a PRC1-like complex. Distinct PRC1-like core complexes are composed of a RING1 subunit (RING1B or RING1A), one of the six PCGF proteins (PCGF1-6), one PHC protein (PHC1-3) and one of the CBX proteins (CBX2, CBX4, CBX6, CBX7 or CBX8). The composition of the PRC1 complex may differ between the PRC1 complex in pluripotent embryonic stem cells containing RNF2, CBX7 and PCGF2, and the PRC1 complex in differentiating cells containing RNF2, CBX2, CBX4 and BMI1. Interacts with RING1. Interacts with RNF2/RING1B. Interacts with PCGF1, PCGF2, PCGF3, PCGF5 and PCGF6. Interacts (via chromodomain) with histone H3K9Me3 and H3K27me3. Interacts with H3K9Me2 and H4K20Me1. Interacts (via chromodomain) with single-stranded and double-stranded RNA; RNA binding seems to be required for the localization to chromatin (By similarity).</text>
</comment>
<comment type="subcellular location">
    <subcellularLocation>
        <location evidence="1">Nucleus</location>
    </subcellularLocation>
    <subcellularLocation>
        <location evidence="1">Chromosome</location>
    </subcellularLocation>
    <text evidence="1">Requires trimethylation at 'Lys-27' (H3K27me3) for the localization to chromatin. Localizes to facultative heterochromatin and to the inactivated X chromosome in females.</text>
</comment>
<keyword id="KW-0156">Chromatin regulator</keyword>
<keyword id="KW-0158">Chromosome</keyword>
<keyword id="KW-0539">Nucleus</keyword>
<keyword id="KW-1185">Reference proteome</keyword>
<keyword id="KW-0678">Repressor</keyword>
<keyword id="KW-0694">RNA-binding</keyword>
<keyword id="KW-0804">Transcription</keyword>
<keyword id="KW-0805">Transcription regulation</keyword>
<gene>
    <name type="primary">Cbx7</name>
</gene>
<accession>P60889</accession>
<dbReference type="EMBL" id="BC062392">
    <property type="protein sequence ID" value="AAH62392.1"/>
    <property type="molecule type" value="mRNA"/>
</dbReference>
<dbReference type="RefSeq" id="NP_954548.1">
    <property type="nucleotide sequence ID" value="NM_199117.2"/>
</dbReference>
<dbReference type="RefSeq" id="XP_006242087.1">
    <property type="nucleotide sequence ID" value="XM_006242025.3"/>
</dbReference>
<dbReference type="BMRB" id="P60889"/>
<dbReference type="SMR" id="P60889"/>
<dbReference type="FunCoup" id="P60889">
    <property type="interactions" value="756"/>
</dbReference>
<dbReference type="IntAct" id="P60889">
    <property type="interactions" value="2"/>
</dbReference>
<dbReference type="MINT" id="P60889"/>
<dbReference type="STRING" id="10116.ENSRNOP00000022631"/>
<dbReference type="PhosphoSitePlus" id="P60889"/>
<dbReference type="PaxDb" id="10116-ENSRNOP00000022631"/>
<dbReference type="GeneID" id="362962"/>
<dbReference type="KEGG" id="rno:362962"/>
<dbReference type="UCSC" id="RGD:735027">
    <property type="organism name" value="rat"/>
</dbReference>
<dbReference type="AGR" id="RGD:735027"/>
<dbReference type="CTD" id="23492"/>
<dbReference type="RGD" id="735027">
    <property type="gene designation" value="Cbx7"/>
</dbReference>
<dbReference type="VEuPathDB" id="HostDB:ENSRNOG00000016875"/>
<dbReference type="eggNOG" id="KOG2748">
    <property type="taxonomic scope" value="Eukaryota"/>
</dbReference>
<dbReference type="InParanoid" id="P60889"/>
<dbReference type="PhylomeDB" id="P60889"/>
<dbReference type="TreeFam" id="TF106456"/>
<dbReference type="PRO" id="PR:P60889"/>
<dbReference type="Proteomes" id="UP000002494">
    <property type="component" value="Chromosome 7"/>
</dbReference>
<dbReference type="Bgee" id="ENSRNOG00000016875">
    <property type="expression patterns" value="Expressed in cerebellum and 20 other cell types or tissues"/>
</dbReference>
<dbReference type="GO" id="GO:0000785">
    <property type="term" value="C:chromatin"/>
    <property type="evidence" value="ECO:0000266"/>
    <property type="project" value="RGD"/>
</dbReference>
<dbReference type="GO" id="GO:0000792">
    <property type="term" value="C:heterochromatin"/>
    <property type="evidence" value="ECO:0000266"/>
    <property type="project" value="RGD"/>
</dbReference>
<dbReference type="GO" id="GO:0005634">
    <property type="term" value="C:nucleus"/>
    <property type="evidence" value="ECO:0000266"/>
    <property type="project" value="RGD"/>
</dbReference>
<dbReference type="GO" id="GO:0031519">
    <property type="term" value="C:PcG protein complex"/>
    <property type="evidence" value="ECO:0000250"/>
    <property type="project" value="UniProtKB"/>
</dbReference>
<dbReference type="GO" id="GO:0035102">
    <property type="term" value="C:PRC1 complex"/>
    <property type="evidence" value="ECO:0000250"/>
    <property type="project" value="UniProtKB"/>
</dbReference>
<dbReference type="GO" id="GO:0003682">
    <property type="term" value="F:chromatin binding"/>
    <property type="evidence" value="ECO:0000266"/>
    <property type="project" value="RGD"/>
</dbReference>
<dbReference type="GO" id="GO:0035064">
    <property type="term" value="F:methylated histone binding"/>
    <property type="evidence" value="ECO:0000266"/>
    <property type="project" value="RGD"/>
</dbReference>
<dbReference type="GO" id="GO:0003727">
    <property type="term" value="F:single-stranded RNA binding"/>
    <property type="evidence" value="ECO:0000266"/>
    <property type="project" value="RGD"/>
</dbReference>
<dbReference type="GO" id="GO:0006325">
    <property type="term" value="P:chromatin organization"/>
    <property type="evidence" value="ECO:0007669"/>
    <property type="project" value="UniProtKB-KW"/>
</dbReference>
<dbReference type="GO" id="GO:0003006">
    <property type="term" value="P:developmental process involved in reproduction"/>
    <property type="evidence" value="ECO:0000270"/>
    <property type="project" value="RGD"/>
</dbReference>
<dbReference type="GO" id="GO:0000122">
    <property type="term" value="P:negative regulation of transcription by RNA polymerase II"/>
    <property type="evidence" value="ECO:0000266"/>
    <property type="project" value="RGD"/>
</dbReference>
<dbReference type="GO" id="GO:0032968">
    <property type="term" value="P:positive regulation of transcription elongation by RNA polymerase II"/>
    <property type="evidence" value="ECO:0000315"/>
    <property type="project" value="RGD"/>
</dbReference>
<dbReference type="GO" id="GO:0009410">
    <property type="term" value="P:response to xenobiotic stimulus"/>
    <property type="evidence" value="ECO:0000270"/>
    <property type="project" value="RGD"/>
</dbReference>
<dbReference type="GO" id="GO:0048733">
    <property type="term" value="P:sebaceous gland development"/>
    <property type="evidence" value="ECO:0000266"/>
    <property type="project" value="RGD"/>
</dbReference>
<dbReference type="CDD" id="cd18646">
    <property type="entry name" value="CD_Cbx7"/>
    <property type="match status" value="1"/>
</dbReference>
<dbReference type="FunFam" id="2.40.50.40:FF:000006">
    <property type="entry name" value="Chromobox protein homolog 7"/>
    <property type="match status" value="1"/>
</dbReference>
<dbReference type="Gene3D" id="2.40.50.40">
    <property type="match status" value="1"/>
</dbReference>
<dbReference type="InterPro" id="IPR043000">
    <property type="entry name" value="CBX7"/>
</dbReference>
<dbReference type="InterPro" id="IPR033773">
    <property type="entry name" value="CBX7_C"/>
</dbReference>
<dbReference type="InterPro" id="IPR016197">
    <property type="entry name" value="Chromo-like_dom_sf"/>
</dbReference>
<dbReference type="InterPro" id="IPR000953">
    <property type="entry name" value="Chromo/chromo_shadow_dom"/>
</dbReference>
<dbReference type="InterPro" id="IPR017984">
    <property type="entry name" value="Chromo_dom_subgr"/>
</dbReference>
<dbReference type="InterPro" id="IPR023780">
    <property type="entry name" value="Chromo_domain"/>
</dbReference>
<dbReference type="InterPro" id="IPR023779">
    <property type="entry name" value="Chromodomain_CS"/>
</dbReference>
<dbReference type="PANTHER" id="PTHR47277">
    <property type="entry name" value="CHROMOBOX PROTEIN HOMOLOG 7"/>
    <property type="match status" value="1"/>
</dbReference>
<dbReference type="PANTHER" id="PTHR47277:SF1">
    <property type="entry name" value="CHROMOBOX PROTEIN HOMOLOG 7"/>
    <property type="match status" value="1"/>
</dbReference>
<dbReference type="Pfam" id="PF17218">
    <property type="entry name" value="CBX7_C"/>
    <property type="match status" value="1"/>
</dbReference>
<dbReference type="Pfam" id="PF00385">
    <property type="entry name" value="Chromo"/>
    <property type="match status" value="1"/>
</dbReference>
<dbReference type="PRINTS" id="PR00504">
    <property type="entry name" value="CHROMODOMAIN"/>
</dbReference>
<dbReference type="SMART" id="SM00298">
    <property type="entry name" value="CHROMO"/>
    <property type="match status" value="1"/>
</dbReference>
<dbReference type="SUPFAM" id="SSF54160">
    <property type="entry name" value="Chromo domain-like"/>
    <property type="match status" value="1"/>
</dbReference>
<dbReference type="PROSITE" id="PS00598">
    <property type="entry name" value="CHROMO_1"/>
    <property type="match status" value="1"/>
</dbReference>
<dbReference type="PROSITE" id="PS50013">
    <property type="entry name" value="CHROMO_2"/>
    <property type="match status" value="1"/>
</dbReference>
<sequence>MELSAIGEQVFAVESIRKKRVRKGKVEYLVKWKGWPPKYSTWEPEEHILDPRLVMAYEEKEEKDRASGYRKRGPKPKRLLLQESAAPDVLQATGDWEPVEQPPEEEAEADLTNGPPPWTPMLPSSEVTVTDITANSVTVTFREAQAAEGFFRDRSGKL</sequence>
<name>CBX7_RAT</name>
<protein>
    <recommendedName>
        <fullName>Chromobox protein homolog 7</fullName>
    </recommendedName>
</protein>
<feature type="chain" id="PRO_0000080214" description="Chromobox protein homolog 7">
    <location>
        <begin position="1"/>
        <end position="158"/>
    </location>
</feature>
<feature type="domain" description="Chromo" evidence="2">
    <location>
        <begin position="11"/>
        <end position="69"/>
    </location>
</feature>
<feature type="region of interest" description="Disordered" evidence="3">
    <location>
        <begin position="60"/>
        <end position="124"/>
    </location>
</feature>
<feature type="compositionally biased region" description="Basic residues" evidence="3">
    <location>
        <begin position="68"/>
        <end position="78"/>
    </location>
</feature>
<organism>
    <name type="scientific">Rattus norvegicus</name>
    <name type="common">Rat</name>
    <dbReference type="NCBI Taxonomy" id="10116"/>
    <lineage>
        <taxon>Eukaryota</taxon>
        <taxon>Metazoa</taxon>
        <taxon>Chordata</taxon>
        <taxon>Craniata</taxon>
        <taxon>Vertebrata</taxon>
        <taxon>Euteleostomi</taxon>
        <taxon>Mammalia</taxon>
        <taxon>Eutheria</taxon>
        <taxon>Euarchontoglires</taxon>
        <taxon>Glires</taxon>
        <taxon>Rodentia</taxon>
        <taxon>Myomorpha</taxon>
        <taxon>Muroidea</taxon>
        <taxon>Muridae</taxon>
        <taxon>Murinae</taxon>
        <taxon>Rattus</taxon>
    </lineage>
</organism>
<evidence type="ECO:0000250" key="1">
    <source>
        <dbReference type="UniProtKB" id="Q8VDS3"/>
    </source>
</evidence>
<evidence type="ECO:0000255" key="2">
    <source>
        <dbReference type="PROSITE-ProRule" id="PRU00053"/>
    </source>
</evidence>
<evidence type="ECO:0000256" key="3">
    <source>
        <dbReference type="SAM" id="MobiDB-lite"/>
    </source>
</evidence>